<evidence type="ECO:0000255" key="1">
    <source>
        <dbReference type="HAMAP-Rule" id="MF_01541"/>
    </source>
</evidence>
<feature type="chain" id="PRO_0000199939" description="Sulfite reductase [NADPH] flavoprotein alpha-component">
    <location>
        <begin position="1"/>
        <end position="614"/>
    </location>
</feature>
<feature type="domain" description="Flavodoxin-like" evidence="1">
    <location>
        <begin position="79"/>
        <end position="217"/>
    </location>
</feature>
<feature type="domain" description="FAD-binding FR-type" evidence="1">
    <location>
        <begin position="249"/>
        <end position="463"/>
    </location>
</feature>
<feature type="binding site" evidence="1">
    <location>
        <begin position="85"/>
        <end position="90"/>
    </location>
    <ligand>
        <name>FMN</name>
        <dbReference type="ChEBI" id="CHEBI:58210"/>
    </ligand>
</feature>
<feature type="binding site" evidence="1">
    <location>
        <begin position="132"/>
        <end position="135"/>
    </location>
    <ligand>
        <name>FMN</name>
        <dbReference type="ChEBI" id="CHEBI:58210"/>
    </ligand>
</feature>
<feature type="binding site" evidence="1">
    <location>
        <begin position="168"/>
        <end position="177"/>
    </location>
    <ligand>
        <name>FMN</name>
        <dbReference type="ChEBI" id="CHEBI:58210"/>
    </ligand>
</feature>
<feature type="binding site" evidence="1">
    <location>
        <position position="337"/>
    </location>
    <ligand>
        <name>FAD</name>
        <dbReference type="ChEBI" id="CHEBI:57692"/>
    </ligand>
</feature>
<feature type="binding site" evidence="1">
    <location>
        <position position="371"/>
    </location>
    <ligand>
        <name>FAD</name>
        <dbReference type="ChEBI" id="CHEBI:57692"/>
    </ligand>
</feature>
<feature type="binding site" evidence="1">
    <location>
        <begin position="401"/>
        <end position="404"/>
    </location>
    <ligand>
        <name>FAD</name>
        <dbReference type="ChEBI" id="CHEBI:57692"/>
    </ligand>
</feature>
<feature type="binding site" evidence="1">
    <location>
        <begin position="419"/>
        <end position="421"/>
    </location>
    <ligand>
        <name>FAD</name>
        <dbReference type="ChEBI" id="CHEBI:57692"/>
    </ligand>
</feature>
<feature type="binding site" evidence="1">
    <location>
        <position position="425"/>
    </location>
    <ligand>
        <name>FAD</name>
        <dbReference type="ChEBI" id="CHEBI:57692"/>
    </ligand>
</feature>
<feature type="binding site" evidence="1">
    <location>
        <begin position="434"/>
        <end position="437"/>
    </location>
    <ligand>
        <name>FAD</name>
        <dbReference type="ChEBI" id="CHEBI:57692"/>
    </ligand>
</feature>
<feature type="binding site" evidence="1">
    <location>
        <begin position="534"/>
        <end position="535"/>
    </location>
    <ligand>
        <name>NADP(+)</name>
        <dbReference type="ChEBI" id="CHEBI:58349"/>
    </ligand>
</feature>
<feature type="binding site" evidence="1">
    <location>
        <begin position="540"/>
        <end position="544"/>
    </location>
    <ligand>
        <name>NADP(+)</name>
        <dbReference type="ChEBI" id="CHEBI:58349"/>
    </ligand>
</feature>
<feature type="binding site" evidence="1">
    <location>
        <position position="576"/>
    </location>
    <ligand>
        <name>NADP(+)</name>
        <dbReference type="ChEBI" id="CHEBI:58349"/>
    </ligand>
</feature>
<feature type="binding site" evidence="1">
    <location>
        <position position="614"/>
    </location>
    <ligand>
        <name>FAD</name>
        <dbReference type="ChEBI" id="CHEBI:57692"/>
    </ligand>
</feature>
<organism>
    <name type="scientific">Vibrio cholerae serotype O1 (strain ATCC 39315 / El Tor Inaba N16961)</name>
    <dbReference type="NCBI Taxonomy" id="243277"/>
    <lineage>
        <taxon>Bacteria</taxon>
        <taxon>Pseudomonadati</taxon>
        <taxon>Pseudomonadota</taxon>
        <taxon>Gammaproteobacteria</taxon>
        <taxon>Vibrionales</taxon>
        <taxon>Vibrionaceae</taxon>
        <taxon>Vibrio</taxon>
    </lineage>
</organism>
<reference key="1">
    <citation type="journal article" date="2000" name="Nature">
        <title>DNA sequence of both chromosomes of the cholera pathogen Vibrio cholerae.</title>
        <authorList>
            <person name="Heidelberg J.F."/>
            <person name="Eisen J.A."/>
            <person name="Nelson W.C."/>
            <person name="Clayton R.A."/>
            <person name="Gwinn M.L."/>
            <person name="Dodson R.J."/>
            <person name="Haft D.H."/>
            <person name="Hickey E.K."/>
            <person name="Peterson J.D."/>
            <person name="Umayam L.A."/>
            <person name="Gill S.R."/>
            <person name="Nelson K.E."/>
            <person name="Read T.D."/>
            <person name="Tettelin H."/>
            <person name="Richardson D.L."/>
            <person name="Ermolaeva M.D."/>
            <person name="Vamathevan J.J."/>
            <person name="Bass S."/>
            <person name="Qin H."/>
            <person name="Dragoi I."/>
            <person name="Sellers P."/>
            <person name="McDonald L.A."/>
            <person name="Utterback T.R."/>
            <person name="Fleischmann R.D."/>
            <person name="Nierman W.C."/>
            <person name="White O."/>
            <person name="Salzberg S.L."/>
            <person name="Smith H.O."/>
            <person name="Colwell R.R."/>
            <person name="Mekalanos J.J."/>
            <person name="Venter J.C."/>
            <person name="Fraser C.M."/>
        </authorList>
    </citation>
    <scope>NUCLEOTIDE SEQUENCE [LARGE SCALE GENOMIC DNA]</scope>
    <source>
        <strain>ATCC 39315 / El Tor Inaba N16961</strain>
    </source>
</reference>
<protein>
    <recommendedName>
        <fullName evidence="1">Sulfite reductase [NADPH] flavoprotein alpha-component</fullName>
        <shortName evidence="1">SiR-FP</shortName>
        <ecNumber evidence="1">1.8.1.2</ecNumber>
    </recommendedName>
</protein>
<sequence length="614" mass="67702">MNREVVTMSTGNTLPPALAALASPLNDAQLNQLQQTVTQLNAQQLAWVSGYFWGLSQSNALSVPHISAGQTASAASGKLTIIFASQTGNAKGVAQALLKEAQAAGIQAQLFDASDYKGKDLAKETHVIFVASTNGEGEAPDNALALHEFLKSKKAPKLPNLKYGVLGLGDSSYQFFCQTGKDFDQFLENLGAQRLVERLDADVDYQAAATEWRKQVLSILKDELTGAAAVTSVATFAVSQTAESHYSKEQPYTASLSTSQKITGRDSGKDVRHIEIDLADSGITYQPGDALGVWYENRPQLVNALLDSVGLSGHEEVQVDGETLSLHSALTHHYEITAANPQLVAQFAELAQSEKLTSLAQDKEALREYATRTQVIDVLREEKVTLSAIQLLSLLRRLTPRLYSIASSQSEVGEEVHLTVGVVEYEYEGEQRLGGASSFLAHQLEEGAPVKVFVEHNNNFKLPSDDNAPLIMVGPGTGIAPFRSFIQERENRGAAGKNWLLFGDRTFTQDFLYQVEWQKYLKSGVLNRLDVAFSRDQHEKVYVQHRLLEQAELVWQWLQEGAYFYVCGDASRMAKDVHQALITVVEQQGGLNREQAEEYVSELRKAKRYQRDVY</sequence>
<proteinExistence type="inferred from homology"/>
<keyword id="KW-0028">Amino-acid biosynthesis</keyword>
<keyword id="KW-0198">Cysteine biosynthesis</keyword>
<keyword id="KW-0249">Electron transport</keyword>
<keyword id="KW-0274">FAD</keyword>
<keyword id="KW-0285">Flavoprotein</keyword>
<keyword id="KW-0288">FMN</keyword>
<keyword id="KW-0521">NADP</keyword>
<keyword id="KW-0560">Oxidoreductase</keyword>
<keyword id="KW-1185">Reference proteome</keyword>
<keyword id="KW-0813">Transport</keyword>
<accession>Q9KUX4</accession>
<name>CYSJ_VIBCH</name>
<gene>
    <name evidence="1" type="primary">cysJ</name>
    <name type="ordered locus">VC_0384</name>
</gene>
<dbReference type="EC" id="1.8.1.2" evidence="1"/>
<dbReference type="EMBL" id="AE003852">
    <property type="protein sequence ID" value="AAF93557.1"/>
    <property type="molecule type" value="Genomic_DNA"/>
</dbReference>
<dbReference type="PIR" id="B82329">
    <property type="entry name" value="B82329"/>
</dbReference>
<dbReference type="RefSeq" id="NP_230038.1">
    <property type="nucleotide sequence ID" value="NC_002505.1"/>
</dbReference>
<dbReference type="SMR" id="Q9KUX4"/>
<dbReference type="STRING" id="243277.VC_0384"/>
<dbReference type="DNASU" id="2615027"/>
<dbReference type="EnsemblBacteria" id="AAF93557">
    <property type="protein sequence ID" value="AAF93557"/>
    <property type="gene ID" value="VC_0384"/>
</dbReference>
<dbReference type="KEGG" id="vch:VC_0384"/>
<dbReference type="PATRIC" id="fig|243277.26.peg.360"/>
<dbReference type="eggNOG" id="COG0369">
    <property type="taxonomic scope" value="Bacteria"/>
</dbReference>
<dbReference type="HOGENOM" id="CLU_001570_17_7_6"/>
<dbReference type="UniPathway" id="UPA00140">
    <property type="reaction ID" value="UER00207"/>
</dbReference>
<dbReference type="Proteomes" id="UP000000584">
    <property type="component" value="Chromosome 1"/>
</dbReference>
<dbReference type="GO" id="GO:0005829">
    <property type="term" value="C:cytosol"/>
    <property type="evidence" value="ECO:0000318"/>
    <property type="project" value="GO_Central"/>
</dbReference>
<dbReference type="GO" id="GO:0050660">
    <property type="term" value="F:flavin adenine dinucleotide binding"/>
    <property type="evidence" value="ECO:0000318"/>
    <property type="project" value="GO_Central"/>
</dbReference>
<dbReference type="GO" id="GO:0010181">
    <property type="term" value="F:FMN binding"/>
    <property type="evidence" value="ECO:0000318"/>
    <property type="project" value="GO_Central"/>
</dbReference>
<dbReference type="GO" id="GO:0016491">
    <property type="term" value="F:oxidoreductase activity"/>
    <property type="evidence" value="ECO:0000318"/>
    <property type="project" value="GO_Central"/>
</dbReference>
<dbReference type="GO" id="GO:0004783">
    <property type="term" value="F:sulfite reductase (NADPH) activity"/>
    <property type="evidence" value="ECO:0007669"/>
    <property type="project" value="UniProtKB-UniRule"/>
</dbReference>
<dbReference type="GO" id="GO:0019344">
    <property type="term" value="P:cysteine biosynthetic process"/>
    <property type="evidence" value="ECO:0007669"/>
    <property type="project" value="UniProtKB-KW"/>
</dbReference>
<dbReference type="GO" id="GO:0070814">
    <property type="term" value="P:hydrogen sulfide biosynthetic process"/>
    <property type="evidence" value="ECO:0007669"/>
    <property type="project" value="UniProtKB-UniRule"/>
</dbReference>
<dbReference type="GO" id="GO:0000103">
    <property type="term" value="P:sulfate assimilation"/>
    <property type="evidence" value="ECO:0007669"/>
    <property type="project" value="UniProtKB-UniRule"/>
</dbReference>
<dbReference type="CDD" id="cd06199">
    <property type="entry name" value="SiR"/>
    <property type="match status" value="1"/>
</dbReference>
<dbReference type="FunFam" id="3.40.50.80:FF:000001">
    <property type="entry name" value="NADPH--cytochrome P450 reductase 1"/>
    <property type="match status" value="1"/>
</dbReference>
<dbReference type="FunFam" id="3.40.50.360:FF:000018">
    <property type="entry name" value="Sulfite reductase [NADPH] flavoprotein alpha-component"/>
    <property type="match status" value="1"/>
</dbReference>
<dbReference type="Gene3D" id="3.40.50.360">
    <property type="match status" value="1"/>
</dbReference>
<dbReference type="Gene3D" id="1.20.990.10">
    <property type="entry name" value="NADPH-cytochrome p450 Reductase, Chain A, domain 3"/>
    <property type="match status" value="1"/>
</dbReference>
<dbReference type="Gene3D" id="3.40.50.80">
    <property type="entry name" value="Nucleotide-binding domain of ferredoxin-NADP reductase (FNR) module"/>
    <property type="match status" value="1"/>
</dbReference>
<dbReference type="Gene3D" id="2.40.30.10">
    <property type="entry name" value="Translation factors"/>
    <property type="match status" value="1"/>
</dbReference>
<dbReference type="HAMAP" id="MF_01541">
    <property type="entry name" value="CysJ"/>
    <property type="match status" value="1"/>
</dbReference>
<dbReference type="InterPro" id="IPR010199">
    <property type="entry name" value="CysJ"/>
</dbReference>
<dbReference type="InterPro" id="IPR003097">
    <property type="entry name" value="CysJ-like_FAD-binding"/>
</dbReference>
<dbReference type="InterPro" id="IPR029758">
    <property type="entry name" value="CysJ_Proteobact"/>
</dbReference>
<dbReference type="InterPro" id="IPR017927">
    <property type="entry name" value="FAD-bd_FR_type"/>
</dbReference>
<dbReference type="InterPro" id="IPR001094">
    <property type="entry name" value="Flavdoxin-like"/>
</dbReference>
<dbReference type="InterPro" id="IPR008254">
    <property type="entry name" value="Flavodoxin/NO_synth"/>
</dbReference>
<dbReference type="InterPro" id="IPR001709">
    <property type="entry name" value="Flavoprot_Pyr_Nucl_cyt_Rdtase"/>
</dbReference>
<dbReference type="InterPro" id="IPR029039">
    <property type="entry name" value="Flavoprotein-like_sf"/>
</dbReference>
<dbReference type="InterPro" id="IPR039261">
    <property type="entry name" value="FNR_nucleotide-bd"/>
</dbReference>
<dbReference type="InterPro" id="IPR023173">
    <property type="entry name" value="NADPH_Cyt_P450_Rdtase_alpha"/>
</dbReference>
<dbReference type="InterPro" id="IPR001433">
    <property type="entry name" value="OxRdtase_FAD/NAD-bd"/>
</dbReference>
<dbReference type="InterPro" id="IPR017938">
    <property type="entry name" value="Riboflavin_synthase-like_b-brl"/>
</dbReference>
<dbReference type="NCBIfam" id="TIGR01931">
    <property type="entry name" value="cysJ"/>
    <property type="match status" value="1"/>
</dbReference>
<dbReference type="NCBIfam" id="NF008197">
    <property type="entry name" value="PRK10953.1"/>
    <property type="match status" value="1"/>
</dbReference>
<dbReference type="PANTHER" id="PTHR19384:SF128">
    <property type="entry name" value="NADPH OXIDOREDUCTASE A"/>
    <property type="match status" value="1"/>
</dbReference>
<dbReference type="PANTHER" id="PTHR19384">
    <property type="entry name" value="NITRIC OXIDE SYNTHASE-RELATED"/>
    <property type="match status" value="1"/>
</dbReference>
<dbReference type="Pfam" id="PF00667">
    <property type="entry name" value="FAD_binding_1"/>
    <property type="match status" value="1"/>
</dbReference>
<dbReference type="Pfam" id="PF00258">
    <property type="entry name" value="Flavodoxin_1"/>
    <property type="match status" value="1"/>
</dbReference>
<dbReference type="Pfam" id="PF00175">
    <property type="entry name" value="NAD_binding_1"/>
    <property type="match status" value="1"/>
</dbReference>
<dbReference type="PIRSF" id="PIRSF000207">
    <property type="entry name" value="SiR-FP_CysJ"/>
    <property type="match status" value="1"/>
</dbReference>
<dbReference type="PRINTS" id="PR00369">
    <property type="entry name" value="FLAVODOXIN"/>
</dbReference>
<dbReference type="PRINTS" id="PR00371">
    <property type="entry name" value="FPNCR"/>
</dbReference>
<dbReference type="SUPFAM" id="SSF52343">
    <property type="entry name" value="Ferredoxin reductase-like, C-terminal NADP-linked domain"/>
    <property type="match status" value="1"/>
</dbReference>
<dbReference type="SUPFAM" id="SSF52218">
    <property type="entry name" value="Flavoproteins"/>
    <property type="match status" value="1"/>
</dbReference>
<dbReference type="SUPFAM" id="SSF63380">
    <property type="entry name" value="Riboflavin synthase domain-like"/>
    <property type="match status" value="1"/>
</dbReference>
<dbReference type="PROSITE" id="PS51384">
    <property type="entry name" value="FAD_FR"/>
    <property type="match status" value="1"/>
</dbReference>
<dbReference type="PROSITE" id="PS50902">
    <property type="entry name" value="FLAVODOXIN_LIKE"/>
    <property type="match status" value="1"/>
</dbReference>
<comment type="function">
    <text evidence="1">Component of the sulfite reductase complex that catalyzes the 6-electron reduction of sulfite to sulfide. This is one of several activities required for the biosynthesis of L-cysteine from sulfate. The flavoprotein component catalyzes the electron flow from NADPH -&gt; FAD -&gt; FMN to the hemoprotein component.</text>
</comment>
<comment type="catalytic activity">
    <reaction evidence="1">
        <text>hydrogen sulfide + 3 NADP(+) + 3 H2O = sulfite + 3 NADPH + 4 H(+)</text>
        <dbReference type="Rhea" id="RHEA:13801"/>
        <dbReference type="ChEBI" id="CHEBI:15377"/>
        <dbReference type="ChEBI" id="CHEBI:15378"/>
        <dbReference type="ChEBI" id="CHEBI:17359"/>
        <dbReference type="ChEBI" id="CHEBI:29919"/>
        <dbReference type="ChEBI" id="CHEBI:57783"/>
        <dbReference type="ChEBI" id="CHEBI:58349"/>
        <dbReference type="EC" id="1.8.1.2"/>
    </reaction>
</comment>
<comment type="cofactor">
    <cofactor evidence="1">
        <name>FAD</name>
        <dbReference type="ChEBI" id="CHEBI:57692"/>
    </cofactor>
    <text evidence="1">Binds 1 FAD per subunit.</text>
</comment>
<comment type="cofactor">
    <cofactor evidence="1">
        <name>FMN</name>
        <dbReference type="ChEBI" id="CHEBI:58210"/>
    </cofactor>
    <text evidence="1">Binds 1 FMN per subunit.</text>
</comment>
<comment type="pathway">
    <text evidence="1">Sulfur metabolism; hydrogen sulfide biosynthesis; hydrogen sulfide from sulfite (NADPH route): step 1/1.</text>
</comment>
<comment type="subunit">
    <text evidence="1">Alpha(8)-beta(8). The alpha component is a flavoprotein, the beta component is a hemoprotein.</text>
</comment>
<comment type="similarity">
    <text evidence="1">Belongs to the NADPH-dependent sulphite reductase flavoprotein subunit CysJ family.</text>
</comment>
<comment type="similarity">
    <text evidence="1">In the N-terminal section; belongs to the flavodoxin family.</text>
</comment>
<comment type="similarity">
    <text evidence="1">In the C-terminal section; belongs to the flavoprotein pyridine nucleotide cytochrome reductase family.</text>
</comment>